<reference key="1">
    <citation type="journal article" date="2004" name="Nat. Biotechnol.">
        <title>Complete sequence and comparative genome analysis of the dairy bacterium Streptococcus thermophilus.</title>
        <authorList>
            <person name="Bolotin A."/>
            <person name="Quinquis B."/>
            <person name="Renault P."/>
            <person name="Sorokin A."/>
            <person name="Ehrlich S.D."/>
            <person name="Kulakauskas S."/>
            <person name="Lapidus A."/>
            <person name="Goltsman E."/>
            <person name="Mazur M."/>
            <person name="Pusch G.D."/>
            <person name="Fonstein M."/>
            <person name="Overbeek R."/>
            <person name="Kyprides N."/>
            <person name="Purnelle B."/>
            <person name="Prozzi D."/>
            <person name="Ngui K."/>
            <person name="Masuy D."/>
            <person name="Hancy F."/>
            <person name="Burteau S."/>
            <person name="Boutry M."/>
            <person name="Delcour J."/>
            <person name="Goffeau A."/>
            <person name="Hols P."/>
        </authorList>
    </citation>
    <scope>NUCLEOTIDE SEQUENCE [LARGE SCALE GENOMIC DNA]</scope>
    <source>
        <strain>CNRZ 1066</strain>
    </source>
</reference>
<evidence type="ECO:0000255" key="1">
    <source>
        <dbReference type="HAMAP-Rule" id="MF_00006"/>
    </source>
</evidence>
<evidence type="ECO:0000305" key="2"/>
<accession>Q5LXZ9</accession>
<name>ARLY_STRT1</name>
<protein>
    <recommendedName>
        <fullName evidence="1">Argininosuccinate lyase</fullName>
        <shortName evidence="1">ASAL</shortName>
        <ecNumber evidence="1">4.3.2.1</ecNumber>
    </recommendedName>
    <alternativeName>
        <fullName evidence="1">Arginosuccinase</fullName>
    </alternativeName>
</protein>
<keyword id="KW-0028">Amino-acid biosynthesis</keyword>
<keyword id="KW-0055">Arginine biosynthesis</keyword>
<keyword id="KW-0963">Cytoplasm</keyword>
<keyword id="KW-0456">Lyase</keyword>
<gene>
    <name evidence="1" type="primary">argH</name>
    <name type="ordered locus">str1812</name>
</gene>
<proteinExistence type="inferred from homology"/>
<dbReference type="EC" id="4.3.2.1" evidence="1"/>
<dbReference type="EMBL" id="CP000024">
    <property type="protein sequence ID" value="AAV63328.1"/>
    <property type="status" value="ALT_INIT"/>
    <property type="molecule type" value="Genomic_DNA"/>
</dbReference>
<dbReference type="RefSeq" id="WP_002953530.1">
    <property type="nucleotide sequence ID" value="NC_006449.1"/>
</dbReference>
<dbReference type="SMR" id="Q5LXZ9"/>
<dbReference type="GeneID" id="66899549"/>
<dbReference type="KEGG" id="stc:str1812"/>
<dbReference type="HOGENOM" id="CLU_027272_2_3_9"/>
<dbReference type="UniPathway" id="UPA00068">
    <property type="reaction ID" value="UER00114"/>
</dbReference>
<dbReference type="GO" id="GO:0005829">
    <property type="term" value="C:cytosol"/>
    <property type="evidence" value="ECO:0007669"/>
    <property type="project" value="TreeGrafter"/>
</dbReference>
<dbReference type="GO" id="GO:0004056">
    <property type="term" value="F:argininosuccinate lyase activity"/>
    <property type="evidence" value="ECO:0007669"/>
    <property type="project" value="UniProtKB-UniRule"/>
</dbReference>
<dbReference type="GO" id="GO:0042450">
    <property type="term" value="P:arginine biosynthetic process via ornithine"/>
    <property type="evidence" value="ECO:0007669"/>
    <property type="project" value="InterPro"/>
</dbReference>
<dbReference type="GO" id="GO:0006526">
    <property type="term" value="P:L-arginine biosynthetic process"/>
    <property type="evidence" value="ECO:0007669"/>
    <property type="project" value="UniProtKB-UniRule"/>
</dbReference>
<dbReference type="CDD" id="cd01359">
    <property type="entry name" value="Argininosuccinate_lyase"/>
    <property type="match status" value="1"/>
</dbReference>
<dbReference type="FunFam" id="1.10.275.10:FF:000002">
    <property type="entry name" value="Argininosuccinate lyase"/>
    <property type="match status" value="1"/>
</dbReference>
<dbReference type="FunFam" id="1.10.40.30:FF:000001">
    <property type="entry name" value="Argininosuccinate lyase"/>
    <property type="match status" value="1"/>
</dbReference>
<dbReference type="FunFam" id="1.20.200.10:FF:000002">
    <property type="entry name" value="Argininosuccinate lyase"/>
    <property type="match status" value="1"/>
</dbReference>
<dbReference type="Gene3D" id="1.10.40.30">
    <property type="entry name" value="Fumarase/aspartase (C-terminal domain)"/>
    <property type="match status" value="1"/>
</dbReference>
<dbReference type="Gene3D" id="1.20.200.10">
    <property type="entry name" value="Fumarase/aspartase (Central domain)"/>
    <property type="match status" value="1"/>
</dbReference>
<dbReference type="Gene3D" id="1.10.275.10">
    <property type="entry name" value="Fumarase/aspartase (N-terminal domain)"/>
    <property type="match status" value="1"/>
</dbReference>
<dbReference type="HAMAP" id="MF_00006">
    <property type="entry name" value="Arg_succ_lyase"/>
    <property type="match status" value="1"/>
</dbReference>
<dbReference type="InterPro" id="IPR029419">
    <property type="entry name" value="Arg_succ_lyase_C"/>
</dbReference>
<dbReference type="InterPro" id="IPR009049">
    <property type="entry name" value="Argininosuccinate_lyase"/>
</dbReference>
<dbReference type="InterPro" id="IPR024083">
    <property type="entry name" value="Fumarase/histidase_N"/>
</dbReference>
<dbReference type="InterPro" id="IPR020557">
    <property type="entry name" value="Fumarate_lyase_CS"/>
</dbReference>
<dbReference type="InterPro" id="IPR000362">
    <property type="entry name" value="Fumarate_lyase_fam"/>
</dbReference>
<dbReference type="InterPro" id="IPR022761">
    <property type="entry name" value="Fumarate_lyase_N"/>
</dbReference>
<dbReference type="InterPro" id="IPR008948">
    <property type="entry name" value="L-Aspartase-like"/>
</dbReference>
<dbReference type="NCBIfam" id="TIGR00838">
    <property type="entry name" value="argH"/>
    <property type="match status" value="1"/>
</dbReference>
<dbReference type="PANTHER" id="PTHR43814">
    <property type="entry name" value="ARGININOSUCCINATE LYASE"/>
    <property type="match status" value="1"/>
</dbReference>
<dbReference type="PANTHER" id="PTHR43814:SF1">
    <property type="entry name" value="ARGININOSUCCINATE LYASE"/>
    <property type="match status" value="1"/>
</dbReference>
<dbReference type="Pfam" id="PF14698">
    <property type="entry name" value="ASL_C2"/>
    <property type="match status" value="1"/>
</dbReference>
<dbReference type="Pfam" id="PF00206">
    <property type="entry name" value="Lyase_1"/>
    <property type="match status" value="1"/>
</dbReference>
<dbReference type="PRINTS" id="PR00145">
    <property type="entry name" value="ARGSUCLYASE"/>
</dbReference>
<dbReference type="PRINTS" id="PR00149">
    <property type="entry name" value="FUMRATELYASE"/>
</dbReference>
<dbReference type="SUPFAM" id="SSF48557">
    <property type="entry name" value="L-aspartase-like"/>
    <property type="match status" value="1"/>
</dbReference>
<dbReference type="PROSITE" id="PS00163">
    <property type="entry name" value="FUMARATE_LYASES"/>
    <property type="match status" value="1"/>
</dbReference>
<sequence length="461" mass="51979">MAENHKLWGGRFEASLEKWVEEFGASISFDQKMAEFDLKGSIAHVTMLGETGIIAQEEALQIKQGLEELLEEYKAGKLEFDVSNEDIHMNIESLLTAKIGPVAGKLHTARSRNDQVATDMHLYLKAKLVEVIEKIDNLRNTLVSLADKHTYTIMPGYTHLQHAQPISFGHHLMAYYNMFTRDSERFEFNIKHTDISPLGAAALAGTTFPIDRNMTSDLMGFAKPYSNSLDAVSDRDFILEFLSNSSILMMHMTRICEEIINWCSNEFKFVTLSDTFSTGSSIMPQKKNPDMAELIRGKSGRVYGNLIGLLTVMKSLPLAYNKDLQEDKEGMFDTVETITVAIDILAGMLNTMTVNDKHMAESTEKDFSNATELADYLATKGLPFREAHEIVGKLVLECTKAGYYLQDVPLERYQEVSDLIEEDIYETLKSHTAVERRHSLGGTGFDQVKWQIKEAQQSLNK</sequence>
<feature type="chain" id="PRO_0000240779" description="Argininosuccinate lyase">
    <location>
        <begin position="1"/>
        <end position="461"/>
    </location>
</feature>
<comment type="catalytic activity">
    <reaction evidence="1">
        <text>2-(N(omega)-L-arginino)succinate = fumarate + L-arginine</text>
        <dbReference type="Rhea" id="RHEA:24020"/>
        <dbReference type="ChEBI" id="CHEBI:29806"/>
        <dbReference type="ChEBI" id="CHEBI:32682"/>
        <dbReference type="ChEBI" id="CHEBI:57472"/>
        <dbReference type="EC" id="4.3.2.1"/>
    </reaction>
</comment>
<comment type="pathway">
    <text evidence="1">Amino-acid biosynthesis; L-arginine biosynthesis; L-arginine from L-ornithine and carbamoyl phosphate: step 3/3.</text>
</comment>
<comment type="subcellular location">
    <subcellularLocation>
        <location evidence="1">Cytoplasm</location>
    </subcellularLocation>
</comment>
<comment type="similarity">
    <text evidence="1">Belongs to the lyase 1 family. Argininosuccinate lyase subfamily.</text>
</comment>
<comment type="sequence caution" evidence="2">
    <conflict type="erroneous initiation">
        <sequence resource="EMBL-CDS" id="AAV63328"/>
    </conflict>
</comment>
<organism>
    <name type="scientific">Streptococcus thermophilus (strain CNRZ 1066)</name>
    <dbReference type="NCBI Taxonomy" id="299768"/>
    <lineage>
        <taxon>Bacteria</taxon>
        <taxon>Bacillati</taxon>
        <taxon>Bacillota</taxon>
        <taxon>Bacilli</taxon>
        <taxon>Lactobacillales</taxon>
        <taxon>Streptococcaceae</taxon>
        <taxon>Streptococcus</taxon>
    </lineage>
</organism>